<reference key="1">
    <citation type="journal article" date="2007" name="Photosyn. Res.">
        <title>Complete nucleotide sequence of the freshwater unicellular cyanobacterium Synechococcus elongatus PCC 6301 chromosome: gene content and organization.</title>
        <authorList>
            <person name="Sugita C."/>
            <person name="Ogata K."/>
            <person name="Shikata M."/>
            <person name="Jikuya H."/>
            <person name="Takano J."/>
            <person name="Furumichi M."/>
            <person name="Kanehisa M."/>
            <person name="Omata T."/>
            <person name="Sugiura M."/>
            <person name="Sugita M."/>
        </authorList>
    </citation>
    <scope>NUCLEOTIDE SEQUENCE [LARGE SCALE GENOMIC DNA]</scope>
    <source>
        <strain>ATCC 27144 / PCC 6301 / SAUG 1402/1</strain>
    </source>
</reference>
<name>PSBA3_SYNP6</name>
<proteinExistence type="inferred from homology"/>
<evidence type="ECO:0000255" key="1">
    <source>
        <dbReference type="HAMAP-Rule" id="MF_01379"/>
    </source>
</evidence>
<evidence type="ECO:0000305" key="2"/>
<dbReference type="EC" id="1.10.3.9" evidence="1"/>
<dbReference type="EMBL" id="AP008231">
    <property type="protein sequence ID" value="BAD79283.1"/>
    <property type="molecule type" value="Genomic_DNA"/>
</dbReference>
<dbReference type="SMR" id="Q5N337"/>
<dbReference type="KEGG" id="syc:syc1093_c"/>
<dbReference type="eggNOG" id="ENOG502Z87P">
    <property type="taxonomic scope" value="Bacteria"/>
</dbReference>
<dbReference type="Proteomes" id="UP000001175">
    <property type="component" value="Chromosome"/>
</dbReference>
<dbReference type="GO" id="GO:0009523">
    <property type="term" value="C:photosystem II"/>
    <property type="evidence" value="ECO:0007669"/>
    <property type="project" value="UniProtKB-KW"/>
</dbReference>
<dbReference type="GO" id="GO:0031676">
    <property type="term" value="C:plasma membrane-derived thylakoid membrane"/>
    <property type="evidence" value="ECO:0007669"/>
    <property type="project" value="UniProtKB-SubCell"/>
</dbReference>
<dbReference type="GO" id="GO:0016168">
    <property type="term" value="F:chlorophyll binding"/>
    <property type="evidence" value="ECO:0007669"/>
    <property type="project" value="UniProtKB-UniRule"/>
</dbReference>
<dbReference type="GO" id="GO:0045156">
    <property type="term" value="F:electron transporter, transferring electrons within the cyclic electron transport pathway of photosynthesis activity"/>
    <property type="evidence" value="ECO:0007669"/>
    <property type="project" value="InterPro"/>
</dbReference>
<dbReference type="GO" id="GO:0005506">
    <property type="term" value="F:iron ion binding"/>
    <property type="evidence" value="ECO:0007669"/>
    <property type="project" value="UniProtKB-UniRule"/>
</dbReference>
<dbReference type="GO" id="GO:0016682">
    <property type="term" value="F:oxidoreductase activity, acting on diphenols and related substances as donors, oxygen as acceptor"/>
    <property type="evidence" value="ECO:0007669"/>
    <property type="project" value="UniProtKB-UniRule"/>
</dbReference>
<dbReference type="GO" id="GO:0010242">
    <property type="term" value="F:oxygen evolving activity"/>
    <property type="evidence" value="ECO:0007669"/>
    <property type="project" value="UniProtKB-EC"/>
</dbReference>
<dbReference type="GO" id="GO:0009772">
    <property type="term" value="P:photosynthetic electron transport in photosystem II"/>
    <property type="evidence" value="ECO:0007669"/>
    <property type="project" value="InterPro"/>
</dbReference>
<dbReference type="GO" id="GO:0009635">
    <property type="term" value="P:response to herbicide"/>
    <property type="evidence" value="ECO:0007669"/>
    <property type="project" value="UniProtKB-KW"/>
</dbReference>
<dbReference type="CDD" id="cd09289">
    <property type="entry name" value="Photosystem-II_D1"/>
    <property type="match status" value="1"/>
</dbReference>
<dbReference type="FunFam" id="1.20.85.10:FF:000002">
    <property type="entry name" value="Photosystem II protein D1"/>
    <property type="match status" value="1"/>
</dbReference>
<dbReference type="Gene3D" id="1.20.85.10">
    <property type="entry name" value="Photosystem II protein D1-like"/>
    <property type="match status" value="1"/>
</dbReference>
<dbReference type="HAMAP" id="MF_01379">
    <property type="entry name" value="PSII_PsbA_D1"/>
    <property type="match status" value="1"/>
</dbReference>
<dbReference type="InterPro" id="IPR055266">
    <property type="entry name" value="D1/D2"/>
</dbReference>
<dbReference type="InterPro" id="IPR036854">
    <property type="entry name" value="Photo_II_D1/D2_sf"/>
</dbReference>
<dbReference type="InterPro" id="IPR000484">
    <property type="entry name" value="Photo_RC_L/M"/>
</dbReference>
<dbReference type="InterPro" id="IPR055265">
    <property type="entry name" value="Photo_RC_L/M_CS"/>
</dbReference>
<dbReference type="InterPro" id="IPR005867">
    <property type="entry name" value="PSII_D1"/>
</dbReference>
<dbReference type="NCBIfam" id="TIGR01151">
    <property type="entry name" value="psbA"/>
    <property type="match status" value="1"/>
</dbReference>
<dbReference type="PANTHER" id="PTHR33149:SF12">
    <property type="entry name" value="PHOTOSYSTEM II D2 PROTEIN"/>
    <property type="match status" value="1"/>
</dbReference>
<dbReference type="PANTHER" id="PTHR33149">
    <property type="entry name" value="PHOTOSYSTEM II PROTEIN D1"/>
    <property type="match status" value="1"/>
</dbReference>
<dbReference type="Pfam" id="PF00124">
    <property type="entry name" value="Photo_RC"/>
    <property type="match status" value="1"/>
</dbReference>
<dbReference type="PRINTS" id="PR00256">
    <property type="entry name" value="REACTNCENTRE"/>
</dbReference>
<dbReference type="SUPFAM" id="SSF81483">
    <property type="entry name" value="Bacterial photosystem II reaction centre, L and M subunits"/>
    <property type="match status" value="1"/>
</dbReference>
<dbReference type="PROSITE" id="PS00244">
    <property type="entry name" value="REACTION_CENTER"/>
    <property type="match status" value="1"/>
</dbReference>
<sequence length="360" mass="39965">MTSILREQRRDNVWDRFCEWVTSTDNRIYVGWFGVLMIPTLLTATICFIVAFIAAPPVDIDGIREPVAGSLMYGNNIISGAVVPSSNAIGLHFYPIWEAASLDEWLYNGGPYQLVVFHFLLGISCYMGRQWELSYRLGMRPWICVAYSAPLSAAFAVFLIYPIGQGSFSDGMPLGISGTFNFMFVFQAEHNILMHPFHMLGVAGVFGGSLFSAMHGSLVTSSLVRETTETESQNYGYKFGQEEETYNIVAAHGYFGRLIFQYASFNNSRSLHFFLGAWPVVGIWFTSMGISTMAFNLNGFNFNQSVLDSQGKVINTWADVLNRANLGMEVMHERNAHNFPLDLAAGEATPVALTAPSIHG</sequence>
<organism>
    <name type="scientific">Synechococcus sp. (strain ATCC 27144 / PCC 6301 / SAUG 1402/1)</name>
    <name type="common">Anacystis nidulans</name>
    <dbReference type="NCBI Taxonomy" id="269084"/>
    <lineage>
        <taxon>Bacteria</taxon>
        <taxon>Bacillati</taxon>
        <taxon>Cyanobacteriota</taxon>
        <taxon>Cyanophyceae</taxon>
        <taxon>Synechococcales</taxon>
        <taxon>Synechococcaceae</taxon>
        <taxon>Synechococcus</taxon>
    </lineage>
</organism>
<accession>Q5N337</accession>
<gene>
    <name evidence="1 2" type="primary">psbA3</name>
    <name type="synonym">psbAI</name>
    <name type="ordered locus">syc1093_c</name>
</gene>
<protein>
    <recommendedName>
        <fullName evidence="1">Photosystem II protein D1 3</fullName>
        <shortName evidence="1">PSII D1 protein 3</shortName>
        <ecNumber evidence="1">1.10.3.9</ecNumber>
    </recommendedName>
    <alternativeName>
        <fullName evidence="1">Photosystem II Q(B) protein 3</fullName>
    </alternativeName>
</protein>
<comment type="function">
    <text evidence="1">Photosystem II (PSII) is a light-driven water:plastoquinone oxidoreductase that uses light energy to abstract electrons from H(2)O, generating O(2) and a proton gradient subsequently used for ATP formation. It consists of a core antenna complex that captures photons, and an electron transfer chain that converts photonic excitation into a charge separation. The D1/D2 (PsbA/PsbD) reaction center heterodimer binds P680, the primary electron donor of PSII as well as several subsequent electron acceptors.</text>
</comment>
<comment type="catalytic activity">
    <reaction evidence="1">
        <text>2 a plastoquinone + 4 hnu + 2 H2O = 2 a plastoquinol + O2</text>
        <dbReference type="Rhea" id="RHEA:36359"/>
        <dbReference type="Rhea" id="RHEA-COMP:9561"/>
        <dbReference type="Rhea" id="RHEA-COMP:9562"/>
        <dbReference type="ChEBI" id="CHEBI:15377"/>
        <dbReference type="ChEBI" id="CHEBI:15379"/>
        <dbReference type="ChEBI" id="CHEBI:17757"/>
        <dbReference type="ChEBI" id="CHEBI:30212"/>
        <dbReference type="ChEBI" id="CHEBI:62192"/>
        <dbReference type="EC" id="1.10.3.9"/>
    </reaction>
</comment>
<comment type="cofactor">
    <text evidence="1">The D1/D2 heterodimer binds P680, chlorophylls that are the primary electron donor of PSII, and subsequent electron acceptors. It shares a non-heme iron and each subunit binds pheophytin, quinone, additional chlorophylls, carotenoids and lipids. D1 provides most of the ligands for the Mn4-Ca-O5 cluster of the oxygen-evolving complex (OEC). There is also a Cl(-1) ion associated with D1 and D2, which is required for oxygen evolution. The PSII complex binds additional chlorophylls, carotenoids and specific lipids.</text>
</comment>
<comment type="subunit">
    <text evidence="1">PSII is composed of 1 copy each of membrane proteins PsbA, PsbB, PsbC, PsbD, PsbE, PsbF, PsbH, PsbI, PsbJ, PsbK, PsbL, PsbM, PsbT, PsbX, PsbY, PsbZ, Psb30/Ycf12, peripheral proteins PsbO, CyanoQ (PsbQ), PsbU, PsbV and a large number of cofactors. It forms dimeric complexes.</text>
</comment>
<comment type="subcellular location">
    <subcellularLocation>
        <location evidence="1">Cellular thylakoid membrane</location>
        <topology evidence="1">Multi-pass membrane protein</topology>
    </subcellularLocation>
</comment>
<comment type="PTM">
    <text evidence="1">Tyr-161 forms a radical intermediate that is referred to as redox-active TyrZ, YZ or Y-Z.</text>
</comment>
<comment type="PTM">
    <text evidence="1">C-terminally processed by CtpA; processing is essential to allow assembly of the oxygen-evolving complex and thus photosynthetic growth.</text>
</comment>
<comment type="miscellaneous">
    <text evidence="1">Cyanobacteria usually contain more than 2 copies of the psbA gene.</text>
</comment>
<comment type="miscellaneous">
    <text evidence="1">2 of the reaction center chlorophylls (ChlD1 and ChlD2) are entirely coordinated by water.</text>
</comment>
<comment type="miscellaneous">
    <text evidence="1">Herbicides such as atrazine, BNT, diuron or ioxynil bind in the Q(B) binding site and block subsequent electron transfer.</text>
</comment>
<comment type="similarity">
    <text evidence="1">Belongs to the reaction center PufL/M/PsbA/D family.</text>
</comment>
<keyword id="KW-0106">Calcium</keyword>
<keyword id="KW-0148">Chlorophyll</keyword>
<keyword id="KW-0157">Chromophore</keyword>
<keyword id="KW-0249">Electron transport</keyword>
<keyword id="KW-0359">Herbicide resistance</keyword>
<keyword id="KW-0408">Iron</keyword>
<keyword id="KW-0460">Magnesium</keyword>
<keyword id="KW-0464">Manganese</keyword>
<keyword id="KW-0472">Membrane</keyword>
<keyword id="KW-0479">Metal-binding</keyword>
<keyword id="KW-0560">Oxidoreductase</keyword>
<keyword id="KW-0602">Photosynthesis</keyword>
<keyword id="KW-0604">Photosystem II</keyword>
<keyword id="KW-0793">Thylakoid</keyword>
<keyword id="KW-0812">Transmembrane</keyword>
<keyword id="KW-1133">Transmembrane helix</keyword>
<keyword id="KW-0813">Transport</keyword>
<feature type="chain" id="PRO_0000316384" description="Photosystem II protein D1 3" evidence="1">
    <location>
        <begin position="1"/>
        <end position="344"/>
    </location>
</feature>
<feature type="propeptide" id="PRO_0000316385" evidence="1">
    <location>
        <begin position="345"/>
        <end position="360"/>
    </location>
</feature>
<feature type="transmembrane region" description="Helical" evidence="1">
    <location>
        <begin position="29"/>
        <end position="46"/>
    </location>
</feature>
<feature type="transmembrane region" description="Helical" evidence="1">
    <location>
        <begin position="118"/>
        <end position="133"/>
    </location>
</feature>
<feature type="transmembrane region" description="Helical" evidence="1">
    <location>
        <begin position="142"/>
        <end position="156"/>
    </location>
</feature>
<feature type="transmembrane region" description="Helical" evidence="1">
    <location>
        <begin position="197"/>
        <end position="218"/>
    </location>
</feature>
<feature type="transmembrane region" description="Helical" evidence="1">
    <location>
        <begin position="274"/>
        <end position="288"/>
    </location>
</feature>
<feature type="binding site" description="axial binding residue" evidence="1">
    <location>
        <position position="118"/>
    </location>
    <ligand>
        <name>chlorophyll a</name>
        <dbReference type="ChEBI" id="CHEBI:58416"/>
        <label>ChlzD1</label>
    </ligand>
    <ligandPart>
        <name>Mg</name>
        <dbReference type="ChEBI" id="CHEBI:25107"/>
    </ligandPart>
</feature>
<feature type="binding site" evidence="1">
    <location>
        <position position="126"/>
    </location>
    <ligand>
        <name>pheophytin a</name>
        <dbReference type="ChEBI" id="CHEBI:136840"/>
        <label>D1</label>
    </ligand>
</feature>
<feature type="binding site" evidence="1">
    <location>
        <position position="170"/>
    </location>
    <ligand>
        <name>[CaMn4O5] cluster</name>
        <dbReference type="ChEBI" id="CHEBI:189552"/>
    </ligand>
</feature>
<feature type="binding site" evidence="1">
    <location>
        <position position="189"/>
    </location>
    <ligand>
        <name>[CaMn4O5] cluster</name>
        <dbReference type="ChEBI" id="CHEBI:189552"/>
    </ligand>
</feature>
<feature type="binding site" description="axial binding residue" evidence="1">
    <location>
        <position position="198"/>
    </location>
    <ligand>
        <name>chlorophyll a</name>
        <dbReference type="ChEBI" id="CHEBI:58416"/>
        <label>PD1</label>
    </ligand>
    <ligandPart>
        <name>Mg</name>
        <dbReference type="ChEBI" id="CHEBI:25107"/>
    </ligandPart>
</feature>
<feature type="binding site" evidence="1">
    <location>
        <position position="215"/>
    </location>
    <ligand>
        <name>a quinone</name>
        <dbReference type="ChEBI" id="CHEBI:132124"/>
        <label>B</label>
    </ligand>
</feature>
<feature type="binding site" evidence="1">
    <location>
        <position position="215"/>
    </location>
    <ligand>
        <name>Fe cation</name>
        <dbReference type="ChEBI" id="CHEBI:24875"/>
        <note>ligand shared with heterodimeric partner</note>
    </ligand>
</feature>
<feature type="binding site" evidence="1">
    <location>
        <begin position="264"/>
        <end position="265"/>
    </location>
    <ligand>
        <name>a quinone</name>
        <dbReference type="ChEBI" id="CHEBI:132124"/>
        <label>B</label>
    </ligand>
</feature>
<feature type="binding site" evidence="1">
    <location>
        <position position="272"/>
    </location>
    <ligand>
        <name>Fe cation</name>
        <dbReference type="ChEBI" id="CHEBI:24875"/>
        <note>ligand shared with heterodimeric partner</note>
    </ligand>
</feature>
<feature type="binding site" evidence="1">
    <location>
        <position position="332"/>
    </location>
    <ligand>
        <name>[CaMn4O5] cluster</name>
        <dbReference type="ChEBI" id="CHEBI:189552"/>
    </ligand>
</feature>
<feature type="binding site" evidence="1">
    <location>
        <position position="333"/>
    </location>
    <ligand>
        <name>[CaMn4O5] cluster</name>
        <dbReference type="ChEBI" id="CHEBI:189552"/>
    </ligand>
</feature>
<feature type="binding site" evidence="1">
    <location>
        <position position="342"/>
    </location>
    <ligand>
        <name>[CaMn4O5] cluster</name>
        <dbReference type="ChEBI" id="CHEBI:189552"/>
    </ligand>
</feature>
<feature type="binding site" evidence="1">
    <location>
        <position position="344"/>
    </location>
    <ligand>
        <name>[CaMn4O5] cluster</name>
        <dbReference type="ChEBI" id="CHEBI:189552"/>
    </ligand>
</feature>
<feature type="site" description="Tyrosine radical intermediate" evidence="1">
    <location>
        <position position="161"/>
    </location>
</feature>
<feature type="site" description="Stabilizes free radical intermediate" evidence="1">
    <location>
        <position position="190"/>
    </location>
</feature>
<feature type="site" description="Cleavage; by CtpA" evidence="1">
    <location>
        <begin position="344"/>
        <end position="345"/>
    </location>
</feature>